<name>Y1496_BACVZ</name>
<gene>
    <name type="ordered locus">RBAM_014960</name>
</gene>
<evidence type="ECO:0000255" key="1">
    <source>
        <dbReference type="HAMAP-Rule" id="MF_00824"/>
    </source>
</evidence>
<accession>A7Z4D3</accession>
<protein>
    <recommendedName>
        <fullName evidence="1">Uncharacterized N-acetyltransferase RBAM_014960</fullName>
        <ecNumber evidence="1">2.3.1.-</ecNumber>
    </recommendedName>
</protein>
<keyword id="KW-0012">Acyltransferase</keyword>
<keyword id="KW-0808">Transferase</keyword>
<dbReference type="EC" id="2.3.1.-" evidence="1"/>
<dbReference type="EMBL" id="CP000560">
    <property type="protein sequence ID" value="ABS73859.1"/>
    <property type="molecule type" value="Genomic_DNA"/>
</dbReference>
<dbReference type="RefSeq" id="WP_012117497.1">
    <property type="nucleotide sequence ID" value="NC_009725.2"/>
</dbReference>
<dbReference type="SMR" id="A7Z4D3"/>
<dbReference type="GeneID" id="93080629"/>
<dbReference type="KEGG" id="bay:RBAM_014960"/>
<dbReference type="HOGENOM" id="CLU_136634_0_0_9"/>
<dbReference type="Proteomes" id="UP000001120">
    <property type="component" value="Chromosome"/>
</dbReference>
<dbReference type="GO" id="GO:0016747">
    <property type="term" value="F:acyltransferase activity, transferring groups other than amino-acyl groups"/>
    <property type="evidence" value="ECO:0007669"/>
    <property type="project" value="UniProtKB-UniRule"/>
</dbReference>
<dbReference type="CDD" id="cd04301">
    <property type="entry name" value="NAT_SF"/>
    <property type="match status" value="1"/>
</dbReference>
<dbReference type="Gene3D" id="3.40.630.30">
    <property type="match status" value="1"/>
</dbReference>
<dbReference type="HAMAP" id="MF_00824">
    <property type="entry name" value="Acetyltransf_YlbP"/>
    <property type="match status" value="1"/>
</dbReference>
<dbReference type="InterPro" id="IPR016181">
    <property type="entry name" value="Acyl_CoA_acyltransferase"/>
</dbReference>
<dbReference type="InterPro" id="IPR000182">
    <property type="entry name" value="GNAT_dom"/>
</dbReference>
<dbReference type="InterPro" id="IPR017274">
    <property type="entry name" value="YlbP"/>
</dbReference>
<dbReference type="NCBIfam" id="NF010241">
    <property type="entry name" value="PRK13688.1"/>
    <property type="match status" value="1"/>
</dbReference>
<dbReference type="Pfam" id="PF00583">
    <property type="entry name" value="Acetyltransf_1"/>
    <property type="match status" value="1"/>
</dbReference>
<dbReference type="PIRSF" id="PIRSF037732">
    <property type="entry name" value="YlbP_prd"/>
    <property type="match status" value="1"/>
</dbReference>
<dbReference type="SUPFAM" id="SSF55729">
    <property type="entry name" value="Acyl-CoA N-acyltransferases (Nat)"/>
    <property type="match status" value="1"/>
</dbReference>
<dbReference type="PROSITE" id="PS51186">
    <property type="entry name" value="GNAT"/>
    <property type="match status" value="1"/>
</dbReference>
<proteinExistence type="inferred from homology"/>
<organism>
    <name type="scientific">Bacillus velezensis (strain DSM 23117 / BGSC 10A6 / LMG 26770 / FZB42)</name>
    <name type="common">Bacillus amyloliquefaciens subsp. plantarum</name>
    <dbReference type="NCBI Taxonomy" id="326423"/>
    <lineage>
        <taxon>Bacteria</taxon>
        <taxon>Bacillati</taxon>
        <taxon>Bacillota</taxon>
        <taxon>Bacilli</taxon>
        <taxon>Bacillales</taxon>
        <taxon>Bacillaceae</taxon>
        <taxon>Bacillus</taxon>
        <taxon>Bacillus amyloliquefaciens group</taxon>
    </lineage>
</organism>
<reference key="1">
    <citation type="journal article" date="2007" name="Nat. Biotechnol.">
        <title>Comparative analysis of the complete genome sequence of the plant growth-promoting bacterium Bacillus amyloliquefaciens FZB42.</title>
        <authorList>
            <person name="Chen X.H."/>
            <person name="Koumoutsi A."/>
            <person name="Scholz R."/>
            <person name="Eisenreich A."/>
            <person name="Schneider K."/>
            <person name="Heinemeyer I."/>
            <person name="Morgenstern B."/>
            <person name="Voss B."/>
            <person name="Hess W.R."/>
            <person name="Reva O."/>
            <person name="Junge H."/>
            <person name="Voigt B."/>
            <person name="Jungblut P.R."/>
            <person name="Vater J."/>
            <person name="Suessmuth R."/>
            <person name="Liesegang H."/>
            <person name="Strittmatter A."/>
            <person name="Gottschalk G."/>
            <person name="Borriss R."/>
        </authorList>
    </citation>
    <scope>NUCLEOTIDE SEQUENCE [LARGE SCALE GENOMIC DNA]</scope>
    <source>
        <strain>DSM 23117 / BGSC 10A6 / LMG 26770 / FZB42</strain>
    </source>
</reference>
<sequence>MLKIERLLINFKTLEEFKRFKEYGMQELSMLEDLQDNIIENDSTSPFYGIYFGDKLVARMSLYQVNGGTNPYFDQRQDFLELWKLEVLPGYQNNGYGKALVDFAKSFRMPIRTNSRMKSADFWDKMNFEPVKYDMARDKGENPYIWHPDMDGEMTSGETA</sequence>
<feature type="chain" id="PRO_1000083940" description="Uncharacterized N-acetyltransferase RBAM_014960">
    <location>
        <begin position="1"/>
        <end position="160"/>
    </location>
</feature>
<feature type="domain" description="N-acetyltransferase" evidence="1">
    <location>
        <begin position="7"/>
        <end position="151"/>
    </location>
</feature>